<proteinExistence type="inferred from homology"/>
<gene>
    <name evidence="1" type="primary">nfo</name>
    <name type="ordered locus">BT_4651</name>
</gene>
<feature type="chain" id="PRO_0000190826" description="Probable endonuclease 4">
    <location>
        <begin position="1"/>
        <end position="277"/>
    </location>
</feature>
<feature type="binding site" evidence="1">
    <location>
        <position position="69"/>
    </location>
    <ligand>
        <name>Zn(2+)</name>
        <dbReference type="ChEBI" id="CHEBI:29105"/>
        <label>1</label>
    </ligand>
</feature>
<feature type="binding site" evidence="1">
    <location>
        <position position="109"/>
    </location>
    <ligand>
        <name>Zn(2+)</name>
        <dbReference type="ChEBI" id="CHEBI:29105"/>
        <label>1</label>
    </ligand>
</feature>
<feature type="binding site" evidence="1">
    <location>
        <position position="145"/>
    </location>
    <ligand>
        <name>Zn(2+)</name>
        <dbReference type="ChEBI" id="CHEBI:29105"/>
        <label>1</label>
    </ligand>
</feature>
<feature type="binding site" evidence="1">
    <location>
        <position position="145"/>
    </location>
    <ligand>
        <name>Zn(2+)</name>
        <dbReference type="ChEBI" id="CHEBI:29105"/>
        <label>2</label>
    </ligand>
</feature>
<feature type="binding site" evidence="1">
    <location>
        <position position="179"/>
    </location>
    <ligand>
        <name>Zn(2+)</name>
        <dbReference type="ChEBI" id="CHEBI:29105"/>
        <label>2</label>
    </ligand>
</feature>
<feature type="binding site" evidence="1">
    <location>
        <position position="182"/>
    </location>
    <ligand>
        <name>Zn(2+)</name>
        <dbReference type="ChEBI" id="CHEBI:29105"/>
        <label>3</label>
    </ligand>
</feature>
<feature type="binding site" evidence="1">
    <location>
        <position position="214"/>
    </location>
    <ligand>
        <name>Zn(2+)</name>
        <dbReference type="ChEBI" id="CHEBI:29105"/>
        <label>2</label>
    </ligand>
</feature>
<feature type="binding site" evidence="1">
    <location>
        <position position="227"/>
    </location>
    <ligand>
        <name>Zn(2+)</name>
        <dbReference type="ChEBI" id="CHEBI:29105"/>
        <label>3</label>
    </ligand>
</feature>
<feature type="binding site" evidence="1">
    <location>
        <position position="229"/>
    </location>
    <ligand>
        <name>Zn(2+)</name>
        <dbReference type="ChEBI" id="CHEBI:29105"/>
        <label>3</label>
    </ligand>
</feature>
<feature type="binding site" evidence="1">
    <location>
        <position position="259"/>
    </location>
    <ligand>
        <name>Zn(2+)</name>
        <dbReference type="ChEBI" id="CHEBI:29105"/>
        <label>2</label>
    </ligand>
</feature>
<organism>
    <name type="scientific">Bacteroides thetaiotaomicron (strain ATCC 29148 / DSM 2079 / JCM 5827 / CCUG 10774 / NCTC 10582 / VPI-5482 / E50)</name>
    <dbReference type="NCBI Taxonomy" id="226186"/>
    <lineage>
        <taxon>Bacteria</taxon>
        <taxon>Pseudomonadati</taxon>
        <taxon>Bacteroidota</taxon>
        <taxon>Bacteroidia</taxon>
        <taxon>Bacteroidales</taxon>
        <taxon>Bacteroidaceae</taxon>
        <taxon>Bacteroides</taxon>
    </lineage>
</organism>
<sequence>MKYIGAHVSASGGVEFAPVNAHEIGANAFALFTKNQRQWVSKPLKEENIRLFKENCTKYNFQTDYILPHDSYLINLGHPEEEGLEKSRAAFLDEMQRCEQLGLKLLNFHPGSHLNKISIEDCLALIAESINLTLEKTKGVTAVIENTAGQGSNLGSEFWQLRYIIDRVNDKSRVGICLDTCHTYTAGYDIVNDYDKVFDEFEKEVGFEYLRGMHLNDSKKELGSHVDRHDNIGQGLIGSAFFERLMKDSRFDNMPLILETPDESKWAEEIAWLRSVE</sequence>
<protein>
    <recommendedName>
        <fullName evidence="1">Probable endonuclease 4</fullName>
        <ecNumber evidence="1">3.1.21.2</ecNumber>
    </recommendedName>
    <alternativeName>
        <fullName evidence="1">Endodeoxyribonuclease IV</fullName>
    </alternativeName>
    <alternativeName>
        <fullName evidence="1">Endonuclease IV</fullName>
    </alternativeName>
</protein>
<reference key="1">
    <citation type="journal article" date="2003" name="Science">
        <title>A genomic view of the human-Bacteroides thetaiotaomicron symbiosis.</title>
        <authorList>
            <person name="Xu J."/>
            <person name="Bjursell M.K."/>
            <person name="Himrod J."/>
            <person name="Deng S."/>
            <person name="Carmichael L.K."/>
            <person name="Chiang H.C."/>
            <person name="Hooper L.V."/>
            <person name="Gordon J.I."/>
        </authorList>
    </citation>
    <scope>NUCLEOTIDE SEQUENCE [LARGE SCALE GENOMIC DNA]</scope>
    <source>
        <strain>ATCC 29148 / DSM 2079 / JCM 5827 / CCUG 10774 / NCTC 10582 / VPI-5482 / E50</strain>
    </source>
</reference>
<evidence type="ECO:0000255" key="1">
    <source>
        <dbReference type="HAMAP-Rule" id="MF_00152"/>
    </source>
</evidence>
<keyword id="KW-0227">DNA damage</keyword>
<keyword id="KW-0234">DNA repair</keyword>
<keyword id="KW-0255">Endonuclease</keyword>
<keyword id="KW-0378">Hydrolase</keyword>
<keyword id="KW-0479">Metal-binding</keyword>
<keyword id="KW-0540">Nuclease</keyword>
<keyword id="KW-1185">Reference proteome</keyword>
<keyword id="KW-0862">Zinc</keyword>
<name>END4_BACTN</name>
<comment type="function">
    <text evidence="1">Endonuclease IV plays a role in DNA repair. It cleaves phosphodiester bonds at apurinic or apyrimidinic (AP) sites, generating a 3'-hydroxyl group and a 5'-terminal sugar phosphate.</text>
</comment>
<comment type="catalytic activity">
    <reaction evidence="1">
        <text>Endonucleolytic cleavage to 5'-phosphooligonucleotide end-products.</text>
        <dbReference type="EC" id="3.1.21.2"/>
    </reaction>
</comment>
<comment type="cofactor">
    <cofactor evidence="1">
        <name>Zn(2+)</name>
        <dbReference type="ChEBI" id="CHEBI:29105"/>
    </cofactor>
    <text evidence="1">Binds 3 Zn(2+) ions.</text>
</comment>
<comment type="similarity">
    <text evidence="1">Belongs to the AP endonuclease 2 family.</text>
</comment>
<accession>Q89YT0</accession>
<dbReference type="EC" id="3.1.21.2" evidence="1"/>
<dbReference type="EMBL" id="AE015928">
    <property type="protein sequence ID" value="AAO79756.1"/>
    <property type="molecule type" value="Genomic_DNA"/>
</dbReference>
<dbReference type="RefSeq" id="NP_813562.1">
    <property type="nucleotide sequence ID" value="NC_004663.1"/>
</dbReference>
<dbReference type="RefSeq" id="WP_011109358.1">
    <property type="nucleotide sequence ID" value="NC_004663.1"/>
</dbReference>
<dbReference type="SMR" id="Q89YT0"/>
<dbReference type="FunCoup" id="Q89YT0">
    <property type="interactions" value="293"/>
</dbReference>
<dbReference type="STRING" id="226186.BT_4651"/>
<dbReference type="PaxDb" id="226186-BT_4651"/>
<dbReference type="EnsemblBacteria" id="AAO79756">
    <property type="protein sequence ID" value="AAO79756"/>
    <property type="gene ID" value="BT_4651"/>
</dbReference>
<dbReference type="GeneID" id="60925824"/>
<dbReference type="KEGG" id="bth:BT_4651"/>
<dbReference type="PATRIC" id="fig|226186.12.peg.4730"/>
<dbReference type="eggNOG" id="COG0648">
    <property type="taxonomic scope" value="Bacteria"/>
</dbReference>
<dbReference type="HOGENOM" id="CLU_025885_0_4_10"/>
<dbReference type="InParanoid" id="Q89YT0"/>
<dbReference type="OrthoDB" id="9805666at2"/>
<dbReference type="Proteomes" id="UP000001414">
    <property type="component" value="Chromosome"/>
</dbReference>
<dbReference type="GO" id="GO:0008833">
    <property type="term" value="F:deoxyribonuclease IV (phage-T4-induced) activity"/>
    <property type="evidence" value="ECO:0007669"/>
    <property type="project" value="UniProtKB-UniRule"/>
</dbReference>
<dbReference type="GO" id="GO:0003677">
    <property type="term" value="F:DNA binding"/>
    <property type="evidence" value="ECO:0007669"/>
    <property type="project" value="InterPro"/>
</dbReference>
<dbReference type="GO" id="GO:0003906">
    <property type="term" value="F:DNA-(apurinic or apyrimidinic site) endonuclease activity"/>
    <property type="evidence" value="ECO:0000318"/>
    <property type="project" value="GO_Central"/>
</dbReference>
<dbReference type="GO" id="GO:0008081">
    <property type="term" value="F:phosphoric diester hydrolase activity"/>
    <property type="evidence" value="ECO:0000318"/>
    <property type="project" value="GO_Central"/>
</dbReference>
<dbReference type="GO" id="GO:0008270">
    <property type="term" value="F:zinc ion binding"/>
    <property type="evidence" value="ECO:0007669"/>
    <property type="project" value="UniProtKB-UniRule"/>
</dbReference>
<dbReference type="GO" id="GO:0006284">
    <property type="term" value="P:base-excision repair"/>
    <property type="evidence" value="ECO:0000318"/>
    <property type="project" value="GO_Central"/>
</dbReference>
<dbReference type="CDD" id="cd00019">
    <property type="entry name" value="AP2Ec"/>
    <property type="match status" value="1"/>
</dbReference>
<dbReference type="FunFam" id="3.20.20.150:FF:000001">
    <property type="entry name" value="Probable endonuclease 4"/>
    <property type="match status" value="1"/>
</dbReference>
<dbReference type="Gene3D" id="3.20.20.150">
    <property type="entry name" value="Divalent-metal-dependent TIM barrel enzymes"/>
    <property type="match status" value="1"/>
</dbReference>
<dbReference type="HAMAP" id="MF_00152">
    <property type="entry name" value="Nfo"/>
    <property type="match status" value="1"/>
</dbReference>
<dbReference type="InterPro" id="IPR001719">
    <property type="entry name" value="AP_endonuc_2"/>
</dbReference>
<dbReference type="InterPro" id="IPR018246">
    <property type="entry name" value="AP_endonuc_F2_Zn_BS"/>
</dbReference>
<dbReference type="InterPro" id="IPR036237">
    <property type="entry name" value="Xyl_isomerase-like_sf"/>
</dbReference>
<dbReference type="InterPro" id="IPR013022">
    <property type="entry name" value="Xyl_isomerase-like_TIM-brl"/>
</dbReference>
<dbReference type="NCBIfam" id="TIGR00587">
    <property type="entry name" value="nfo"/>
    <property type="match status" value="1"/>
</dbReference>
<dbReference type="NCBIfam" id="NF002199">
    <property type="entry name" value="PRK01060.1-4"/>
    <property type="match status" value="1"/>
</dbReference>
<dbReference type="PANTHER" id="PTHR21445:SF0">
    <property type="entry name" value="APURINIC-APYRIMIDINIC ENDONUCLEASE"/>
    <property type="match status" value="1"/>
</dbReference>
<dbReference type="PANTHER" id="PTHR21445">
    <property type="entry name" value="ENDONUCLEASE IV ENDODEOXYRIBONUCLEASE IV"/>
    <property type="match status" value="1"/>
</dbReference>
<dbReference type="Pfam" id="PF01261">
    <property type="entry name" value="AP_endonuc_2"/>
    <property type="match status" value="1"/>
</dbReference>
<dbReference type="SMART" id="SM00518">
    <property type="entry name" value="AP2Ec"/>
    <property type="match status" value="1"/>
</dbReference>
<dbReference type="SUPFAM" id="SSF51658">
    <property type="entry name" value="Xylose isomerase-like"/>
    <property type="match status" value="1"/>
</dbReference>
<dbReference type="PROSITE" id="PS00729">
    <property type="entry name" value="AP_NUCLEASE_F2_1"/>
    <property type="match status" value="1"/>
</dbReference>
<dbReference type="PROSITE" id="PS00730">
    <property type="entry name" value="AP_NUCLEASE_F2_2"/>
    <property type="match status" value="1"/>
</dbReference>
<dbReference type="PROSITE" id="PS00731">
    <property type="entry name" value="AP_NUCLEASE_F2_3"/>
    <property type="match status" value="1"/>
</dbReference>
<dbReference type="PROSITE" id="PS51432">
    <property type="entry name" value="AP_NUCLEASE_F2_4"/>
    <property type="match status" value="1"/>
</dbReference>